<sequence length="48" mass="5789">MPQLVPFYFLNQLTYGFLLLIILLVLFSQFLLPRILRLYISRLFISKL</sequence>
<accession>P48882</accession>
<comment type="function">
    <text evidence="1">Mitochondrial membrane ATP synthase (F(1)F(0) ATP synthase or Complex V) produces ATP from ADP in the presence of a proton gradient across the membrane which is generated by electron transport complexes of the respiratory chain. F-type ATPases consist of two structural domains, F(1) - containing the extramembraneous catalytic core and F(0) - containing the membrane proton channel, linked together by a central stalk and a peripheral stalk. During catalysis, ATP synthesis in the catalytic domain of F(1) is coupled via a rotary mechanism of the central stalk subunits to proton translocation. Part of the complex F(0) domain. Minor subunit located with subunit a in the membrane (By similarity).</text>
</comment>
<comment type="subunit">
    <text evidence="1">F-type ATPases have 2 components, CF(1) - the catalytic core - and CF(0) - the membrane proton channel.</text>
</comment>
<comment type="subcellular location">
    <subcellularLocation>
        <location>Mitochondrion membrane</location>
        <topology>Single-pass membrane protein</topology>
    </subcellularLocation>
</comment>
<comment type="similarity">
    <text evidence="3">Belongs to the ATPase protein 8 family.</text>
</comment>
<proteinExistence type="inferred from homology"/>
<gene>
    <name type="primary">ATP8</name>
</gene>
<keyword id="KW-0066">ATP synthesis</keyword>
<keyword id="KW-0138">CF(0)</keyword>
<keyword id="KW-0375">Hydrogen ion transport</keyword>
<keyword id="KW-0406">Ion transport</keyword>
<keyword id="KW-0472">Membrane</keyword>
<keyword id="KW-0496">Mitochondrion</keyword>
<keyword id="KW-0812">Transmembrane</keyword>
<keyword id="KW-1133">Transmembrane helix</keyword>
<keyword id="KW-0813">Transport</keyword>
<evidence type="ECO:0000250" key="1"/>
<evidence type="ECO:0000255" key="2"/>
<evidence type="ECO:0000305" key="3"/>
<protein>
    <recommendedName>
        <fullName>ATP synthase protein 8</fullName>
    </recommendedName>
    <alternativeName>
        <fullName>A6L</fullName>
    </alternativeName>
    <alternativeName>
        <fullName>F-ATPase subunit 8</fullName>
    </alternativeName>
</protein>
<feature type="chain" id="PRO_0000195600" description="ATP synthase protein 8">
    <location>
        <begin position="1"/>
        <end position="48"/>
    </location>
</feature>
<feature type="transmembrane region" description="Helical" evidence="2">
    <location>
        <begin position="13"/>
        <end position="33"/>
    </location>
</feature>
<geneLocation type="mitochondrion"/>
<name>ATP8_WICCA</name>
<reference key="1">
    <citation type="journal article" date="1995" name="Curr. Genet.">
        <title>The complete mitochondrial DNA sequence of Hansenula wingei reveals new characteristics of yeast mitochondria.</title>
        <authorList>
            <person name="Sekito T."/>
            <person name="Okamoto K."/>
            <person name="Kitano H."/>
            <person name="Yoshida K."/>
        </authorList>
    </citation>
    <scope>NUCLEOTIDE SEQUENCE [LARGE SCALE GENOMIC DNA]</scope>
    <source>
        <strain>21</strain>
    </source>
</reference>
<organism>
    <name type="scientific">Wickerhamomyces canadensis</name>
    <name type="common">Yeast</name>
    <name type="synonym">Pichia canadensis</name>
    <dbReference type="NCBI Taxonomy" id="1156965"/>
    <lineage>
        <taxon>Eukaryota</taxon>
        <taxon>Fungi</taxon>
        <taxon>Dikarya</taxon>
        <taxon>Ascomycota</taxon>
        <taxon>Saccharomycotina</taxon>
        <taxon>Saccharomycetes</taxon>
        <taxon>Phaffomycetales</taxon>
        <taxon>Wickerhamomycetaceae</taxon>
        <taxon>Wickerhamomyces</taxon>
    </lineage>
</organism>
<dbReference type="EMBL" id="D31785">
    <property type="protein sequence ID" value="BAA06565.2"/>
    <property type="molecule type" value="Genomic_DNA"/>
</dbReference>
<dbReference type="PIR" id="S58742">
    <property type="entry name" value="S58742"/>
</dbReference>
<dbReference type="RefSeq" id="NP_038210.1">
    <property type="nucleotide sequence ID" value="NC_001762.1"/>
</dbReference>
<dbReference type="SMR" id="P48882"/>
<dbReference type="GeneID" id="800569"/>
<dbReference type="GO" id="GO:0031966">
    <property type="term" value="C:mitochondrial membrane"/>
    <property type="evidence" value="ECO:0007669"/>
    <property type="project" value="UniProtKB-SubCell"/>
</dbReference>
<dbReference type="GO" id="GO:0045259">
    <property type="term" value="C:proton-transporting ATP synthase complex"/>
    <property type="evidence" value="ECO:0007669"/>
    <property type="project" value="UniProtKB-KW"/>
</dbReference>
<dbReference type="GO" id="GO:0046933">
    <property type="term" value="F:proton-transporting ATP synthase activity, rotational mechanism"/>
    <property type="evidence" value="ECO:0007669"/>
    <property type="project" value="TreeGrafter"/>
</dbReference>
<dbReference type="InterPro" id="IPR009230">
    <property type="entry name" value="ATP_synth_su8_fun"/>
</dbReference>
<dbReference type="PANTHER" id="PTHR36101">
    <property type="entry name" value="ATP SYNTHASE PROTEIN 8"/>
    <property type="match status" value="1"/>
</dbReference>
<dbReference type="PANTHER" id="PTHR36101:SF1">
    <property type="entry name" value="ATP SYNTHASE PROTEIN 8"/>
    <property type="match status" value="1"/>
</dbReference>
<dbReference type="Pfam" id="PF05933">
    <property type="entry name" value="Fun_ATP-synt_8"/>
    <property type="match status" value="1"/>
</dbReference>